<accession>A9MIY3</accession>
<evidence type="ECO:0000255" key="1">
    <source>
        <dbReference type="HAMAP-Rule" id="MF_01813"/>
    </source>
</evidence>
<proteinExistence type="inferred from homology"/>
<keyword id="KW-0474">Menaquinone biosynthesis</keyword>
<keyword id="KW-0489">Methyltransferase</keyword>
<keyword id="KW-1185">Reference proteome</keyword>
<keyword id="KW-0949">S-adenosyl-L-methionine</keyword>
<keyword id="KW-0808">Transferase</keyword>
<keyword id="KW-0831">Ubiquinone biosynthesis</keyword>
<sequence length="251" mass="28190">MVEDSQETTHFGFQTVAKEQKADMVAHVFHSVASKYDVMNDLMSFGIHRLWKRFTIDCSGVRRGQTVLDLAGGTGDLTAKFSRMVGETGKVILADINDSMLKMGREKLRNIGVIGNVEYVQANAEALPFPDNTFDCITISFGLRNVTEKEKALRSMFRVLKPGGRLLVLEFSKPIIEPLSKAYDAYSFHILPRIGLMVANDADSYRYLAESIRMHPDQDTLKVMMQDAGFESVDYYNLTAGVVALHRGYKF</sequence>
<name>UBIE_SALAR</name>
<organism>
    <name type="scientific">Salmonella arizonae (strain ATCC BAA-731 / CDC346-86 / RSK2980)</name>
    <dbReference type="NCBI Taxonomy" id="41514"/>
    <lineage>
        <taxon>Bacteria</taxon>
        <taxon>Pseudomonadati</taxon>
        <taxon>Pseudomonadota</taxon>
        <taxon>Gammaproteobacteria</taxon>
        <taxon>Enterobacterales</taxon>
        <taxon>Enterobacteriaceae</taxon>
        <taxon>Salmonella</taxon>
    </lineage>
</organism>
<feature type="chain" id="PRO_1000088293" description="Ubiquinone/menaquinone biosynthesis C-methyltransferase UbiE">
    <location>
        <begin position="1"/>
        <end position="251"/>
    </location>
</feature>
<feature type="binding site" evidence="1">
    <location>
        <position position="74"/>
    </location>
    <ligand>
        <name>S-adenosyl-L-methionine</name>
        <dbReference type="ChEBI" id="CHEBI:59789"/>
    </ligand>
</feature>
<feature type="binding site" evidence="1">
    <location>
        <position position="95"/>
    </location>
    <ligand>
        <name>S-adenosyl-L-methionine</name>
        <dbReference type="ChEBI" id="CHEBI:59789"/>
    </ligand>
</feature>
<feature type="binding site" evidence="1">
    <location>
        <begin position="123"/>
        <end position="124"/>
    </location>
    <ligand>
        <name>S-adenosyl-L-methionine</name>
        <dbReference type="ChEBI" id="CHEBI:59789"/>
    </ligand>
</feature>
<feature type="binding site" evidence="1">
    <location>
        <position position="140"/>
    </location>
    <ligand>
        <name>S-adenosyl-L-methionine</name>
        <dbReference type="ChEBI" id="CHEBI:59789"/>
    </ligand>
</feature>
<gene>
    <name evidence="1" type="primary">ubiE</name>
    <name type="ordered locus">SARI_03687</name>
</gene>
<reference key="1">
    <citation type="submission" date="2007-11" db="EMBL/GenBank/DDBJ databases">
        <authorList>
            <consortium name="The Salmonella enterica serovar Arizonae Genome Sequencing Project"/>
            <person name="McClelland M."/>
            <person name="Sanderson E.K."/>
            <person name="Porwollik S."/>
            <person name="Spieth J."/>
            <person name="Clifton W.S."/>
            <person name="Fulton R."/>
            <person name="Chunyan W."/>
            <person name="Wollam A."/>
            <person name="Shah N."/>
            <person name="Pepin K."/>
            <person name="Bhonagiri V."/>
            <person name="Nash W."/>
            <person name="Johnson M."/>
            <person name="Thiruvilangam P."/>
            <person name="Wilson R."/>
        </authorList>
    </citation>
    <scope>NUCLEOTIDE SEQUENCE [LARGE SCALE GENOMIC DNA]</scope>
    <source>
        <strain>ATCC BAA-731 / CDC346-86 / RSK2980</strain>
    </source>
</reference>
<protein>
    <recommendedName>
        <fullName evidence="1">Ubiquinone/menaquinone biosynthesis C-methyltransferase UbiE</fullName>
        <ecNumber evidence="1">2.1.1.163</ecNumber>
        <ecNumber evidence="1">2.1.1.201</ecNumber>
    </recommendedName>
    <alternativeName>
        <fullName evidence="1">2-methoxy-6-polyprenyl-1,4-benzoquinol methylase</fullName>
    </alternativeName>
    <alternativeName>
        <fullName evidence="1">Demethylmenaquinone methyltransferase</fullName>
    </alternativeName>
</protein>
<comment type="function">
    <text evidence="1">Methyltransferase required for the conversion of demethylmenaquinol (DMKH2) to menaquinol (MKH2) and the conversion of 2-polyprenyl-6-methoxy-1,4-benzoquinol (DDMQH2) to 2-polyprenyl-3-methyl-6-methoxy-1,4-benzoquinol (DMQH2).</text>
</comment>
<comment type="catalytic activity">
    <reaction evidence="1">
        <text>a 2-demethylmenaquinol + S-adenosyl-L-methionine = a menaquinol + S-adenosyl-L-homocysteine + H(+)</text>
        <dbReference type="Rhea" id="RHEA:42640"/>
        <dbReference type="Rhea" id="RHEA-COMP:9539"/>
        <dbReference type="Rhea" id="RHEA-COMP:9563"/>
        <dbReference type="ChEBI" id="CHEBI:15378"/>
        <dbReference type="ChEBI" id="CHEBI:18151"/>
        <dbReference type="ChEBI" id="CHEBI:55437"/>
        <dbReference type="ChEBI" id="CHEBI:57856"/>
        <dbReference type="ChEBI" id="CHEBI:59789"/>
        <dbReference type="EC" id="2.1.1.163"/>
    </reaction>
</comment>
<comment type="catalytic activity">
    <reaction evidence="1">
        <text>a 2-methoxy-6-(all-trans-polyprenyl)benzene-1,4-diol + S-adenosyl-L-methionine = a 5-methoxy-2-methyl-3-(all-trans-polyprenyl)benzene-1,4-diol + S-adenosyl-L-homocysteine + H(+)</text>
        <dbReference type="Rhea" id="RHEA:28286"/>
        <dbReference type="Rhea" id="RHEA-COMP:10858"/>
        <dbReference type="Rhea" id="RHEA-COMP:10859"/>
        <dbReference type="ChEBI" id="CHEBI:15378"/>
        <dbReference type="ChEBI" id="CHEBI:57856"/>
        <dbReference type="ChEBI" id="CHEBI:59789"/>
        <dbReference type="ChEBI" id="CHEBI:84166"/>
        <dbReference type="ChEBI" id="CHEBI:84167"/>
        <dbReference type="EC" id="2.1.1.201"/>
    </reaction>
</comment>
<comment type="pathway">
    <text evidence="1">Quinol/quinone metabolism; menaquinone biosynthesis; menaquinol from 1,4-dihydroxy-2-naphthoate: step 2/2.</text>
</comment>
<comment type="pathway">
    <text evidence="1">Cofactor biosynthesis; ubiquinone biosynthesis.</text>
</comment>
<comment type="similarity">
    <text evidence="1">Belongs to the class I-like SAM-binding methyltransferase superfamily. MenG/UbiE family.</text>
</comment>
<dbReference type="EC" id="2.1.1.163" evidence="1"/>
<dbReference type="EC" id="2.1.1.201" evidence="1"/>
<dbReference type="EMBL" id="CP000880">
    <property type="protein sequence ID" value="ABX23492.1"/>
    <property type="molecule type" value="Genomic_DNA"/>
</dbReference>
<dbReference type="SMR" id="A9MIY3"/>
<dbReference type="STRING" id="41514.SARI_03687"/>
<dbReference type="KEGG" id="ses:SARI_03687"/>
<dbReference type="HOGENOM" id="CLU_037990_0_0_6"/>
<dbReference type="UniPathway" id="UPA00079">
    <property type="reaction ID" value="UER00169"/>
</dbReference>
<dbReference type="UniPathway" id="UPA00232"/>
<dbReference type="Proteomes" id="UP000002084">
    <property type="component" value="Chromosome"/>
</dbReference>
<dbReference type="GO" id="GO:0008425">
    <property type="term" value="F:2-methoxy-6-polyprenyl-1,4-benzoquinol methyltransferase activity"/>
    <property type="evidence" value="ECO:0007669"/>
    <property type="project" value="UniProtKB-UniRule"/>
</dbReference>
<dbReference type="GO" id="GO:0043770">
    <property type="term" value="F:demethylmenaquinone methyltransferase activity"/>
    <property type="evidence" value="ECO:0007669"/>
    <property type="project" value="UniProtKB-UniRule"/>
</dbReference>
<dbReference type="GO" id="GO:0009060">
    <property type="term" value="P:aerobic respiration"/>
    <property type="evidence" value="ECO:0007669"/>
    <property type="project" value="UniProtKB-UniRule"/>
</dbReference>
<dbReference type="GO" id="GO:0009234">
    <property type="term" value="P:menaquinone biosynthetic process"/>
    <property type="evidence" value="ECO:0007669"/>
    <property type="project" value="UniProtKB-UniRule"/>
</dbReference>
<dbReference type="GO" id="GO:0032259">
    <property type="term" value="P:methylation"/>
    <property type="evidence" value="ECO:0007669"/>
    <property type="project" value="UniProtKB-KW"/>
</dbReference>
<dbReference type="CDD" id="cd02440">
    <property type="entry name" value="AdoMet_MTases"/>
    <property type="match status" value="1"/>
</dbReference>
<dbReference type="FunFam" id="3.40.50.150:FF:000014">
    <property type="entry name" value="Ubiquinone/menaquinone biosynthesis C-methyltransferase UbiE"/>
    <property type="match status" value="1"/>
</dbReference>
<dbReference type="Gene3D" id="3.40.50.150">
    <property type="entry name" value="Vaccinia Virus protein VP39"/>
    <property type="match status" value="1"/>
</dbReference>
<dbReference type="HAMAP" id="MF_01813">
    <property type="entry name" value="MenG_UbiE_methyltr"/>
    <property type="match status" value="1"/>
</dbReference>
<dbReference type="InterPro" id="IPR029063">
    <property type="entry name" value="SAM-dependent_MTases_sf"/>
</dbReference>
<dbReference type="InterPro" id="IPR004033">
    <property type="entry name" value="UbiE/COQ5_MeTrFase"/>
</dbReference>
<dbReference type="InterPro" id="IPR023576">
    <property type="entry name" value="UbiE/COQ5_MeTrFase_CS"/>
</dbReference>
<dbReference type="NCBIfam" id="TIGR01934">
    <property type="entry name" value="MenG_MenH_UbiE"/>
    <property type="match status" value="1"/>
</dbReference>
<dbReference type="NCBIfam" id="NF001240">
    <property type="entry name" value="PRK00216.1-1"/>
    <property type="match status" value="1"/>
</dbReference>
<dbReference type="NCBIfam" id="NF001244">
    <property type="entry name" value="PRK00216.1-5"/>
    <property type="match status" value="1"/>
</dbReference>
<dbReference type="PANTHER" id="PTHR43591:SF24">
    <property type="entry name" value="2-METHOXY-6-POLYPRENYL-1,4-BENZOQUINOL METHYLASE, MITOCHONDRIAL"/>
    <property type="match status" value="1"/>
</dbReference>
<dbReference type="PANTHER" id="PTHR43591">
    <property type="entry name" value="METHYLTRANSFERASE"/>
    <property type="match status" value="1"/>
</dbReference>
<dbReference type="Pfam" id="PF01209">
    <property type="entry name" value="Ubie_methyltran"/>
    <property type="match status" value="1"/>
</dbReference>
<dbReference type="SUPFAM" id="SSF53335">
    <property type="entry name" value="S-adenosyl-L-methionine-dependent methyltransferases"/>
    <property type="match status" value="1"/>
</dbReference>
<dbReference type="PROSITE" id="PS51608">
    <property type="entry name" value="SAM_MT_UBIE"/>
    <property type="match status" value="1"/>
</dbReference>
<dbReference type="PROSITE" id="PS01183">
    <property type="entry name" value="UBIE_1"/>
    <property type="match status" value="1"/>
</dbReference>
<dbReference type="PROSITE" id="PS01184">
    <property type="entry name" value="UBIE_2"/>
    <property type="match status" value="1"/>
</dbReference>